<organism>
    <name type="scientific">Francisella tularensis subsp. mediasiatica (strain FSC147)</name>
    <dbReference type="NCBI Taxonomy" id="441952"/>
    <lineage>
        <taxon>Bacteria</taxon>
        <taxon>Pseudomonadati</taxon>
        <taxon>Pseudomonadota</taxon>
        <taxon>Gammaproteobacteria</taxon>
        <taxon>Thiotrichales</taxon>
        <taxon>Francisellaceae</taxon>
        <taxon>Francisella</taxon>
    </lineage>
</organism>
<dbReference type="EMBL" id="CP000915">
    <property type="protein sequence ID" value="ACD31341.1"/>
    <property type="molecule type" value="Genomic_DNA"/>
</dbReference>
<dbReference type="SMR" id="B2SDX7"/>
<dbReference type="KEGG" id="ftm:FTM_1519"/>
<dbReference type="HOGENOM" id="CLU_158491_1_2_6"/>
<dbReference type="GO" id="GO:0022625">
    <property type="term" value="C:cytosolic large ribosomal subunit"/>
    <property type="evidence" value="ECO:0007669"/>
    <property type="project" value="TreeGrafter"/>
</dbReference>
<dbReference type="GO" id="GO:0003735">
    <property type="term" value="F:structural constituent of ribosome"/>
    <property type="evidence" value="ECO:0007669"/>
    <property type="project" value="InterPro"/>
</dbReference>
<dbReference type="GO" id="GO:0006412">
    <property type="term" value="P:translation"/>
    <property type="evidence" value="ECO:0007669"/>
    <property type="project" value="UniProtKB-UniRule"/>
</dbReference>
<dbReference type="CDD" id="cd00427">
    <property type="entry name" value="Ribosomal_L29_HIP"/>
    <property type="match status" value="1"/>
</dbReference>
<dbReference type="Gene3D" id="6.10.140.1970">
    <property type="match status" value="1"/>
</dbReference>
<dbReference type="HAMAP" id="MF_00374">
    <property type="entry name" value="Ribosomal_uL29"/>
    <property type="match status" value="1"/>
</dbReference>
<dbReference type="InterPro" id="IPR050063">
    <property type="entry name" value="Ribosomal_protein_uL29"/>
</dbReference>
<dbReference type="InterPro" id="IPR001854">
    <property type="entry name" value="Ribosomal_uL29"/>
</dbReference>
<dbReference type="InterPro" id="IPR018254">
    <property type="entry name" value="Ribosomal_uL29_CS"/>
</dbReference>
<dbReference type="InterPro" id="IPR036049">
    <property type="entry name" value="Ribosomal_uL29_sf"/>
</dbReference>
<dbReference type="NCBIfam" id="TIGR00012">
    <property type="entry name" value="L29"/>
    <property type="match status" value="1"/>
</dbReference>
<dbReference type="PANTHER" id="PTHR10916">
    <property type="entry name" value="60S RIBOSOMAL PROTEIN L35/50S RIBOSOMAL PROTEIN L29"/>
    <property type="match status" value="1"/>
</dbReference>
<dbReference type="PANTHER" id="PTHR10916:SF0">
    <property type="entry name" value="LARGE RIBOSOMAL SUBUNIT PROTEIN UL29C"/>
    <property type="match status" value="1"/>
</dbReference>
<dbReference type="Pfam" id="PF00831">
    <property type="entry name" value="Ribosomal_L29"/>
    <property type="match status" value="1"/>
</dbReference>
<dbReference type="SUPFAM" id="SSF46561">
    <property type="entry name" value="Ribosomal protein L29 (L29p)"/>
    <property type="match status" value="1"/>
</dbReference>
<dbReference type="PROSITE" id="PS00579">
    <property type="entry name" value="RIBOSOMAL_L29"/>
    <property type="match status" value="1"/>
</dbReference>
<proteinExistence type="inferred from homology"/>
<reference key="1">
    <citation type="journal article" date="2009" name="PLoS Pathog.">
        <title>Molecular evolutionary consequences of niche restriction in Francisella tularensis, a facultative intracellular pathogen.</title>
        <authorList>
            <person name="Larsson P."/>
            <person name="Elfsmark D."/>
            <person name="Svensson K."/>
            <person name="Wikstroem P."/>
            <person name="Forsman M."/>
            <person name="Brettin T."/>
            <person name="Keim P."/>
            <person name="Johansson A."/>
        </authorList>
    </citation>
    <scope>NUCLEOTIDE SEQUENCE [LARGE SCALE GENOMIC DNA]</scope>
    <source>
        <strain>FSC147</strain>
    </source>
</reference>
<evidence type="ECO:0000255" key="1">
    <source>
        <dbReference type="HAMAP-Rule" id="MF_00374"/>
    </source>
</evidence>
<evidence type="ECO:0000305" key="2"/>
<accession>B2SDX7</accession>
<keyword id="KW-0687">Ribonucleoprotein</keyword>
<keyword id="KW-0689">Ribosomal protein</keyword>
<gene>
    <name evidence="1" type="primary">rpmC</name>
    <name type="ordered locus">FTM_1519</name>
</gene>
<sequence length="66" mass="7773">MKRKDTLKDYRGKSIDQLQEAKIELLQQLFSLRMQKGTGQLKKNHLFKSAKRDIARINTIISEKNK</sequence>
<feature type="chain" id="PRO_1000121776" description="Large ribosomal subunit protein uL29">
    <location>
        <begin position="1"/>
        <end position="66"/>
    </location>
</feature>
<protein>
    <recommendedName>
        <fullName evidence="1">Large ribosomal subunit protein uL29</fullName>
    </recommendedName>
    <alternativeName>
        <fullName evidence="2">50S ribosomal protein L29</fullName>
    </alternativeName>
</protein>
<name>RL29_FRATM</name>
<comment type="similarity">
    <text evidence="1">Belongs to the universal ribosomal protein uL29 family.</text>
</comment>